<dbReference type="EC" id="2.3.3.13" evidence="1"/>
<dbReference type="EMBL" id="BA000030">
    <property type="protein sequence ID" value="BAC73313.1"/>
    <property type="molecule type" value="Genomic_DNA"/>
</dbReference>
<dbReference type="RefSeq" id="WP_037645454.1">
    <property type="nucleotide sequence ID" value="NZ_BAVY01000014.1"/>
</dbReference>
<dbReference type="SMR" id="Q82BV3"/>
<dbReference type="GeneID" id="41542690"/>
<dbReference type="KEGG" id="sma:SAVERM_5601"/>
<dbReference type="eggNOG" id="COG0119">
    <property type="taxonomic scope" value="Bacteria"/>
</dbReference>
<dbReference type="HOGENOM" id="CLU_004588_3_0_11"/>
<dbReference type="OrthoDB" id="9803573at2"/>
<dbReference type="UniPathway" id="UPA00048">
    <property type="reaction ID" value="UER00070"/>
</dbReference>
<dbReference type="Proteomes" id="UP000000428">
    <property type="component" value="Chromosome"/>
</dbReference>
<dbReference type="GO" id="GO:0005737">
    <property type="term" value="C:cytoplasm"/>
    <property type="evidence" value="ECO:0007669"/>
    <property type="project" value="UniProtKB-SubCell"/>
</dbReference>
<dbReference type="GO" id="GO:0003852">
    <property type="term" value="F:2-isopropylmalate synthase activity"/>
    <property type="evidence" value="ECO:0007669"/>
    <property type="project" value="UniProtKB-UniRule"/>
</dbReference>
<dbReference type="GO" id="GO:0003985">
    <property type="term" value="F:acetyl-CoA C-acetyltransferase activity"/>
    <property type="evidence" value="ECO:0007669"/>
    <property type="project" value="UniProtKB-UniRule"/>
</dbReference>
<dbReference type="GO" id="GO:0000287">
    <property type="term" value="F:magnesium ion binding"/>
    <property type="evidence" value="ECO:0007669"/>
    <property type="project" value="UniProtKB-UniRule"/>
</dbReference>
<dbReference type="GO" id="GO:0009098">
    <property type="term" value="P:L-leucine biosynthetic process"/>
    <property type="evidence" value="ECO:0007669"/>
    <property type="project" value="UniProtKB-UniRule"/>
</dbReference>
<dbReference type="CDD" id="cd07942">
    <property type="entry name" value="DRE_TIM_LeuA"/>
    <property type="match status" value="1"/>
</dbReference>
<dbReference type="FunFam" id="3.20.20.70:FF:000045">
    <property type="entry name" value="2-isopropylmalate synthase"/>
    <property type="match status" value="1"/>
</dbReference>
<dbReference type="FunFam" id="3.30.160.270:FF:000006">
    <property type="entry name" value="2-isopropylmalate synthase"/>
    <property type="match status" value="1"/>
</dbReference>
<dbReference type="Gene3D" id="3.30.160.270">
    <property type="match status" value="1"/>
</dbReference>
<dbReference type="Gene3D" id="3.20.20.70">
    <property type="entry name" value="Aldolase class I"/>
    <property type="match status" value="1"/>
</dbReference>
<dbReference type="HAMAP" id="MF_00572">
    <property type="entry name" value="LeuA_type2"/>
    <property type="match status" value="1"/>
</dbReference>
<dbReference type="InterPro" id="IPR013709">
    <property type="entry name" value="2-isopropylmalate_synth_dimer"/>
</dbReference>
<dbReference type="InterPro" id="IPR002034">
    <property type="entry name" value="AIPM/Hcit_synth_CS"/>
</dbReference>
<dbReference type="InterPro" id="IPR013785">
    <property type="entry name" value="Aldolase_TIM"/>
</dbReference>
<dbReference type="InterPro" id="IPR005668">
    <property type="entry name" value="IPM_Synthase"/>
</dbReference>
<dbReference type="InterPro" id="IPR054692">
    <property type="entry name" value="LeuA-like_post-cat"/>
</dbReference>
<dbReference type="InterPro" id="IPR036230">
    <property type="entry name" value="LeuA_allosteric_dom_sf"/>
</dbReference>
<dbReference type="InterPro" id="IPR039371">
    <property type="entry name" value="LeuA_N_DRE-TIM"/>
</dbReference>
<dbReference type="InterPro" id="IPR000891">
    <property type="entry name" value="PYR_CT"/>
</dbReference>
<dbReference type="NCBIfam" id="TIGR00970">
    <property type="entry name" value="leuA_yeast"/>
    <property type="match status" value="1"/>
</dbReference>
<dbReference type="NCBIfam" id="NF002991">
    <property type="entry name" value="PRK03739.1"/>
    <property type="match status" value="1"/>
</dbReference>
<dbReference type="PANTHER" id="PTHR46911">
    <property type="match status" value="1"/>
</dbReference>
<dbReference type="PANTHER" id="PTHR46911:SF1">
    <property type="entry name" value="2-ISOPROPYLMALATE SYNTHASE"/>
    <property type="match status" value="1"/>
</dbReference>
<dbReference type="Pfam" id="PF00682">
    <property type="entry name" value="HMGL-like"/>
    <property type="match status" value="1"/>
</dbReference>
<dbReference type="Pfam" id="PF22615">
    <property type="entry name" value="IPMS_D2"/>
    <property type="match status" value="1"/>
</dbReference>
<dbReference type="Pfam" id="PF08502">
    <property type="entry name" value="LeuA_dimer"/>
    <property type="match status" value="1"/>
</dbReference>
<dbReference type="SMART" id="SM00917">
    <property type="entry name" value="LeuA_dimer"/>
    <property type="match status" value="1"/>
</dbReference>
<dbReference type="SUPFAM" id="SSF110921">
    <property type="entry name" value="2-isopropylmalate synthase LeuA, allosteric (dimerisation) domain"/>
    <property type="match status" value="1"/>
</dbReference>
<dbReference type="SUPFAM" id="SSF51569">
    <property type="entry name" value="Aldolase"/>
    <property type="match status" value="1"/>
</dbReference>
<dbReference type="SUPFAM" id="SSF89000">
    <property type="entry name" value="post-HMGL domain-like"/>
    <property type="match status" value="1"/>
</dbReference>
<dbReference type="PROSITE" id="PS00815">
    <property type="entry name" value="AIPM_HOMOCIT_SYNTH_1"/>
    <property type="match status" value="1"/>
</dbReference>
<dbReference type="PROSITE" id="PS00816">
    <property type="entry name" value="AIPM_HOMOCIT_SYNTH_2"/>
    <property type="match status" value="1"/>
</dbReference>
<dbReference type="PROSITE" id="PS50991">
    <property type="entry name" value="PYR_CT"/>
    <property type="match status" value="1"/>
</dbReference>
<accession>Q82BV3</accession>
<sequence>MANRQQPTSMPIHKYRPYEQVDIADRTWPDNRVTVAPRWLSTDLRDGNQALIDPMSPARKREMFDLLVKMGYKEIEVGFPASGQTDFDFVRSIIEDETAIPDDVTISVLTQAREDLIERTVESLVGAKRATVHLYNATAPVFRRVVFRGSKDQIKQIAVDGTRLVVEYAEKLLDERTTFGYQYSPEIFTDTELDFALEVCEAVMDVWQPGPDREIILNLPATVERSTPSTHADRFEWMSRNLSRREYVCLSVHPHNDRGTAVAAAELALMAGADRIEGCLFGQGERTGNVDLVTLGMNLFSQGVDPQIDFSNIDEVRRTAEYCNQMEVHARHPYVGDLVYTSFSGSHQDAIKKGFDAMEADAAAKGVTVDDIEWAVPYLPIDPKDVGRSYEAVIRVNSQSGKGGIAYVLKNDHKLDLPRRMQIEFSKIIQTKTDAEGGEVTPKDIWAVFQDEYLPNPRNPWGRIQVKTGQTTTDKDGVDTLTVEASVDGVDTVLTGSGNGPISAFFDALQSVGIDVRLLDYTEHTMSEGASAQAASYIECAIDGQVLWGIGIDANTTRASLKAVVSAVNRAAR</sequence>
<protein>
    <recommendedName>
        <fullName evidence="1">2-isopropylmalate synthase</fullName>
        <ecNumber evidence="1">2.3.3.13</ecNumber>
    </recommendedName>
    <alternativeName>
        <fullName evidence="1">Alpha-IPM synthase</fullName>
    </alternativeName>
    <alternativeName>
        <fullName evidence="1">Alpha-isopropylmalate synthase</fullName>
    </alternativeName>
</protein>
<gene>
    <name evidence="1" type="primary">leuA</name>
    <name type="ordered locus">SAV_5601</name>
</gene>
<comment type="function">
    <text evidence="1">Catalyzes the condensation of the acetyl group of acetyl-CoA with 3-methyl-2-oxobutanoate (2-ketoisovalerate) to form 3-carboxy-3-hydroxy-4-methylpentanoate (2-isopropylmalate).</text>
</comment>
<comment type="catalytic activity">
    <reaction evidence="1">
        <text>3-methyl-2-oxobutanoate + acetyl-CoA + H2O = (2S)-2-isopropylmalate + CoA + H(+)</text>
        <dbReference type="Rhea" id="RHEA:21524"/>
        <dbReference type="ChEBI" id="CHEBI:1178"/>
        <dbReference type="ChEBI" id="CHEBI:11851"/>
        <dbReference type="ChEBI" id="CHEBI:15377"/>
        <dbReference type="ChEBI" id="CHEBI:15378"/>
        <dbReference type="ChEBI" id="CHEBI:57287"/>
        <dbReference type="ChEBI" id="CHEBI:57288"/>
        <dbReference type="EC" id="2.3.3.13"/>
    </reaction>
</comment>
<comment type="cofactor">
    <cofactor evidence="1">
        <name>Mg(2+)</name>
        <dbReference type="ChEBI" id="CHEBI:18420"/>
    </cofactor>
</comment>
<comment type="pathway">
    <text evidence="1">Amino-acid biosynthesis; L-leucine biosynthesis; L-leucine from 3-methyl-2-oxobutanoate: step 1/4.</text>
</comment>
<comment type="subunit">
    <text evidence="1">Homodimer.</text>
</comment>
<comment type="subcellular location">
    <subcellularLocation>
        <location evidence="1">Cytoplasm</location>
    </subcellularLocation>
</comment>
<comment type="similarity">
    <text evidence="1">Belongs to the alpha-IPM synthase/homocitrate synthase family. LeuA type 2 subfamily.</text>
</comment>
<keyword id="KW-0028">Amino-acid biosynthesis</keyword>
<keyword id="KW-0100">Branched-chain amino acid biosynthesis</keyword>
<keyword id="KW-0963">Cytoplasm</keyword>
<keyword id="KW-0432">Leucine biosynthesis</keyword>
<keyword id="KW-0460">Magnesium</keyword>
<keyword id="KW-0479">Metal-binding</keyword>
<keyword id="KW-1185">Reference proteome</keyword>
<keyword id="KW-0808">Transferase</keyword>
<evidence type="ECO:0000255" key="1">
    <source>
        <dbReference type="HAMAP-Rule" id="MF_00572"/>
    </source>
</evidence>
<reference key="1">
    <citation type="journal article" date="2001" name="Proc. Natl. Acad. Sci. U.S.A.">
        <title>Genome sequence of an industrial microorganism Streptomyces avermitilis: deducing the ability of producing secondary metabolites.</title>
        <authorList>
            <person name="Omura S."/>
            <person name="Ikeda H."/>
            <person name="Ishikawa J."/>
            <person name="Hanamoto A."/>
            <person name="Takahashi C."/>
            <person name="Shinose M."/>
            <person name="Takahashi Y."/>
            <person name="Horikawa H."/>
            <person name="Nakazawa H."/>
            <person name="Osonoe T."/>
            <person name="Kikuchi H."/>
            <person name="Shiba T."/>
            <person name="Sakaki Y."/>
            <person name="Hattori M."/>
        </authorList>
    </citation>
    <scope>NUCLEOTIDE SEQUENCE [LARGE SCALE GENOMIC DNA]</scope>
    <source>
        <strain>ATCC 31267 / DSM 46492 / JCM 5070 / NBRC 14893 / NCIMB 12804 / NRRL 8165 / MA-4680</strain>
    </source>
</reference>
<reference key="2">
    <citation type="journal article" date="2003" name="Nat. Biotechnol.">
        <title>Complete genome sequence and comparative analysis of the industrial microorganism Streptomyces avermitilis.</title>
        <authorList>
            <person name="Ikeda H."/>
            <person name="Ishikawa J."/>
            <person name="Hanamoto A."/>
            <person name="Shinose M."/>
            <person name="Kikuchi H."/>
            <person name="Shiba T."/>
            <person name="Sakaki Y."/>
            <person name="Hattori M."/>
            <person name="Omura S."/>
        </authorList>
    </citation>
    <scope>NUCLEOTIDE SEQUENCE [LARGE SCALE GENOMIC DNA]</scope>
    <source>
        <strain>ATCC 31267 / DSM 46492 / JCM 5070 / NBRC 14893 / NCIMB 12804 / NRRL 8165 / MA-4680</strain>
    </source>
</reference>
<organism>
    <name type="scientific">Streptomyces avermitilis (strain ATCC 31267 / DSM 46492 / JCM 5070 / NBRC 14893 / NCIMB 12804 / NRRL 8165 / MA-4680)</name>
    <dbReference type="NCBI Taxonomy" id="227882"/>
    <lineage>
        <taxon>Bacteria</taxon>
        <taxon>Bacillati</taxon>
        <taxon>Actinomycetota</taxon>
        <taxon>Actinomycetes</taxon>
        <taxon>Kitasatosporales</taxon>
        <taxon>Streptomycetaceae</taxon>
        <taxon>Streptomyces</taxon>
    </lineage>
</organism>
<feature type="chain" id="PRO_0000140443" description="2-isopropylmalate synthase">
    <location>
        <begin position="1"/>
        <end position="573"/>
    </location>
</feature>
<feature type="domain" description="Pyruvate carboxyltransferase" evidence="1">
    <location>
        <begin position="37"/>
        <end position="314"/>
    </location>
</feature>
<feature type="region of interest" description="Regulatory domain" evidence="1">
    <location>
        <begin position="456"/>
        <end position="573"/>
    </location>
</feature>
<feature type="binding site" evidence="1">
    <location>
        <position position="46"/>
    </location>
    <ligand>
        <name>Mg(2+)</name>
        <dbReference type="ChEBI" id="CHEBI:18420"/>
    </ligand>
</feature>
<feature type="binding site" evidence="1">
    <location>
        <position position="253"/>
    </location>
    <ligand>
        <name>Mg(2+)</name>
        <dbReference type="ChEBI" id="CHEBI:18420"/>
    </ligand>
</feature>
<feature type="binding site" evidence="1">
    <location>
        <position position="255"/>
    </location>
    <ligand>
        <name>Mg(2+)</name>
        <dbReference type="ChEBI" id="CHEBI:18420"/>
    </ligand>
</feature>
<feature type="binding site" evidence="1">
    <location>
        <position position="289"/>
    </location>
    <ligand>
        <name>Mg(2+)</name>
        <dbReference type="ChEBI" id="CHEBI:18420"/>
    </ligand>
</feature>
<proteinExistence type="inferred from homology"/>
<name>LEU1_STRAW</name>